<gene>
    <name evidence="1" type="primary">glyS</name>
    <name type="ordered locus">Dhaf_4254</name>
</gene>
<keyword id="KW-0030">Aminoacyl-tRNA synthetase</keyword>
<keyword id="KW-0067">ATP-binding</keyword>
<keyword id="KW-0963">Cytoplasm</keyword>
<keyword id="KW-0436">Ligase</keyword>
<keyword id="KW-0547">Nucleotide-binding</keyword>
<keyword id="KW-0648">Protein biosynthesis</keyword>
<proteinExistence type="inferred from homology"/>
<comment type="catalytic activity">
    <reaction evidence="1">
        <text>tRNA(Gly) + glycine + ATP = glycyl-tRNA(Gly) + AMP + diphosphate</text>
        <dbReference type="Rhea" id="RHEA:16013"/>
        <dbReference type="Rhea" id="RHEA-COMP:9664"/>
        <dbReference type="Rhea" id="RHEA-COMP:9683"/>
        <dbReference type="ChEBI" id="CHEBI:30616"/>
        <dbReference type="ChEBI" id="CHEBI:33019"/>
        <dbReference type="ChEBI" id="CHEBI:57305"/>
        <dbReference type="ChEBI" id="CHEBI:78442"/>
        <dbReference type="ChEBI" id="CHEBI:78522"/>
        <dbReference type="ChEBI" id="CHEBI:456215"/>
        <dbReference type="EC" id="6.1.1.14"/>
    </reaction>
</comment>
<comment type="subunit">
    <text evidence="1">Tetramer of two alpha and two beta subunits.</text>
</comment>
<comment type="subcellular location">
    <subcellularLocation>
        <location evidence="1">Cytoplasm</location>
    </subcellularLocation>
</comment>
<comment type="similarity">
    <text evidence="1">Belongs to the class-II aminoacyl-tRNA synthetase family.</text>
</comment>
<sequence>MAKDFLLEIGTEEIPAKFAPGVLNQLREQAQKYCQELRLDYQDLKVYTTPRRFAVLIQGLAEKQTDFTAEVKGPAVKAAYDAEGNPTKAAQGFARGQGVEPKDLFVQELNGVSYVYARKFELGQPTLQLLPKLCTDLITGLHFPKPMRWADLEFRFARPIRWIVALFGSEVIPFEFVGLASGKASRGHRTLGGPVTLDSPADYEKQMLQAFVMVDPEQRRQSVWEQIHALAAKVGGDVEKDDDLLDEVTHIIEYPTALLGEVAPNYMHLPEPVITTPMKEHQRYFPVRDKEGKLLPYFITVRNGDDYALAKVKAGNEKVLKARLEDAAFYYREDQKTPLAELVEKLDKVTYHEKLGSVRQRVERIRTLARGIAARLGMESEKQDLVERTALLAKADLVTLMVYDFPELQGIMGADYARMVGEKPEVCTGILEHYQPRFAGDELPQSYTGQIVSVADKLDAIVGAFGIGIQPTGSQDPYALRRQAQGVVGIILEAGWDISLEQLIAASYVNFAEQGISLLPLADLQSALQDFFQQRLRFVLQEQGARYDTLDAVLAQGSNQITRAARKAQVLAAKRETTEFVPYSQAYIRCLNLSKKAQTQPLDPKNLIDPTEIALAAALVQRQEAFAALIEKGDYAEAYALASELIPMIEALFNAVMIMVEDEILKQARLALLGECVAILGCLGDLSLLA</sequence>
<reference key="1">
    <citation type="journal article" date="2012" name="BMC Microbiol.">
        <title>Genome sequence of Desulfitobacterium hafniense DCB-2, a Gram-positive anaerobe capable of dehalogenation and metal reduction.</title>
        <authorList>
            <person name="Kim S.H."/>
            <person name="Harzman C."/>
            <person name="Davis J.K."/>
            <person name="Hutcheson R."/>
            <person name="Broderick J.B."/>
            <person name="Marsh T.L."/>
            <person name="Tiedje J.M."/>
        </authorList>
    </citation>
    <scope>NUCLEOTIDE SEQUENCE [LARGE SCALE GENOMIC DNA]</scope>
    <source>
        <strain>DSM 10664 / DCB-2</strain>
    </source>
</reference>
<feature type="chain" id="PRO_1000197176" description="Glycine--tRNA ligase beta subunit">
    <location>
        <begin position="1"/>
        <end position="690"/>
    </location>
</feature>
<organism>
    <name type="scientific">Desulfitobacterium hafniense (strain DSM 10664 / DCB-2)</name>
    <dbReference type="NCBI Taxonomy" id="272564"/>
    <lineage>
        <taxon>Bacteria</taxon>
        <taxon>Bacillati</taxon>
        <taxon>Bacillota</taxon>
        <taxon>Clostridia</taxon>
        <taxon>Eubacteriales</taxon>
        <taxon>Desulfitobacteriaceae</taxon>
        <taxon>Desulfitobacterium</taxon>
    </lineage>
</organism>
<dbReference type="EC" id="6.1.1.14" evidence="1"/>
<dbReference type="EMBL" id="CP001336">
    <property type="protein sequence ID" value="ACL22260.1"/>
    <property type="molecule type" value="Genomic_DNA"/>
</dbReference>
<dbReference type="RefSeq" id="WP_005816394.1">
    <property type="nucleotide sequence ID" value="NC_011830.1"/>
</dbReference>
<dbReference type="SMR" id="B8FUJ0"/>
<dbReference type="KEGG" id="dhd:Dhaf_4254"/>
<dbReference type="HOGENOM" id="CLU_007220_2_2_9"/>
<dbReference type="Proteomes" id="UP000007726">
    <property type="component" value="Chromosome"/>
</dbReference>
<dbReference type="GO" id="GO:0005829">
    <property type="term" value="C:cytosol"/>
    <property type="evidence" value="ECO:0007669"/>
    <property type="project" value="TreeGrafter"/>
</dbReference>
<dbReference type="GO" id="GO:0004814">
    <property type="term" value="F:arginine-tRNA ligase activity"/>
    <property type="evidence" value="ECO:0007669"/>
    <property type="project" value="InterPro"/>
</dbReference>
<dbReference type="GO" id="GO:0005524">
    <property type="term" value="F:ATP binding"/>
    <property type="evidence" value="ECO:0007669"/>
    <property type="project" value="UniProtKB-UniRule"/>
</dbReference>
<dbReference type="GO" id="GO:0004820">
    <property type="term" value="F:glycine-tRNA ligase activity"/>
    <property type="evidence" value="ECO:0007669"/>
    <property type="project" value="UniProtKB-UniRule"/>
</dbReference>
<dbReference type="GO" id="GO:0006420">
    <property type="term" value="P:arginyl-tRNA aminoacylation"/>
    <property type="evidence" value="ECO:0007669"/>
    <property type="project" value="InterPro"/>
</dbReference>
<dbReference type="GO" id="GO:0006426">
    <property type="term" value="P:glycyl-tRNA aminoacylation"/>
    <property type="evidence" value="ECO:0007669"/>
    <property type="project" value="UniProtKB-UniRule"/>
</dbReference>
<dbReference type="HAMAP" id="MF_00255">
    <property type="entry name" value="Gly_tRNA_synth_beta"/>
    <property type="match status" value="1"/>
</dbReference>
<dbReference type="InterPro" id="IPR008909">
    <property type="entry name" value="DALR_anticod-bd"/>
</dbReference>
<dbReference type="InterPro" id="IPR015944">
    <property type="entry name" value="Gly-tRNA-synth_bsu"/>
</dbReference>
<dbReference type="InterPro" id="IPR006194">
    <property type="entry name" value="Gly-tRNA-synth_heterodimer"/>
</dbReference>
<dbReference type="NCBIfam" id="TIGR00211">
    <property type="entry name" value="glyS"/>
    <property type="match status" value="1"/>
</dbReference>
<dbReference type="PANTHER" id="PTHR30075:SF2">
    <property type="entry name" value="GLYCINE--TRNA LIGASE, CHLOROPLASTIC_MITOCHONDRIAL 2"/>
    <property type="match status" value="1"/>
</dbReference>
<dbReference type="PANTHER" id="PTHR30075">
    <property type="entry name" value="GLYCYL-TRNA SYNTHETASE"/>
    <property type="match status" value="1"/>
</dbReference>
<dbReference type="Pfam" id="PF05746">
    <property type="entry name" value="DALR_1"/>
    <property type="match status" value="1"/>
</dbReference>
<dbReference type="Pfam" id="PF02092">
    <property type="entry name" value="tRNA_synt_2f"/>
    <property type="match status" value="1"/>
</dbReference>
<dbReference type="PRINTS" id="PR01045">
    <property type="entry name" value="TRNASYNTHGB"/>
</dbReference>
<dbReference type="SUPFAM" id="SSF109604">
    <property type="entry name" value="HD-domain/PDEase-like"/>
    <property type="match status" value="1"/>
</dbReference>
<dbReference type="PROSITE" id="PS50861">
    <property type="entry name" value="AA_TRNA_LIGASE_II_GLYAB"/>
    <property type="match status" value="1"/>
</dbReference>
<evidence type="ECO:0000255" key="1">
    <source>
        <dbReference type="HAMAP-Rule" id="MF_00255"/>
    </source>
</evidence>
<accession>B8FUJ0</accession>
<name>SYGB_DESHD</name>
<protein>
    <recommendedName>
        <fullName evidence="1">Glycine--tRNA ligase beta subunit</fullName>
        <ecNumber evidence="1">6.1.1.14</ecNumber>
    </recommendedName>
    <alternativeName>
        <fullName evidence="1">Glycyl-tRNA synthetase beta subunit</fullName>
        <shortName evidence="1">GlyRS</shortName>
    </alternativeName>
</protein>